<feature type="chain" id="PRO_0000458710" description="Depolymerase 2, capsule K21-specific">
    <location>
        <begin position="1"/>
        <end position="576"/>
    </location>
</feature>
<feature type="region of interest" description="Catalytic" evidence="2">
    <location>
        <begin position="34"/>
        <end position="360"/>
    </location>
</feature>
<feature type="region of interest" description="Carbohydrate binding" evidence="8">
    <location>
        <begin position="380"/>
        <end position="487"/>
    </location>
</feature>
<feature type="region of interest" description="Lectin-like" evidence="2">
    <location>
        <begin position="488"/>
        <end position="576"/>
    </location>
</feature>
<feature type="active site" evidence="2">
    <location>
        <position position="170"/>
    </location>
</feature>
<feature type="active site" evidence="2">
    <location>
        <position position="229"/>
    </location>
</feature>
<feature type="active site" evidence="2">
    <location>
        <position position="239"/>
    </location>
</feature>
<feature type="active site" evidence="2">
    <location>
        <position position="241"/>
    </location>
</feature>
<feature type="mutagenesis site" description="8 times decreased enzymatic activity." evidence="2">
    <original>D</original>
    <variation>N</variation>
    <location>
        <position position="167"/>
    </location>
</feature>
<feature type="mutagenesis site" description="2000 times decreased enzymatic activity." evidence="2">
    <original>E</original>
    <variation>Q</variation>
    <location>
        <position position="170"/>
    </location>
</feature>
<feature type="mutagenesis site" description="256 times decreased enzymatic activity." evidence="2">
    <original>D</original>
    <variation>N</variation>
    <location>
        <position position="229"/>
    </location>
</feature>
<feature type="mutagenesis site" description="2000 times decreased enzymatic activity." evidence="2">
    <original>E</original>
    <variation>Q</variation>
    <location>
        <position position="239"/>
    </location>
</feature>
<feature type="mutagenesis site" description="15000 times decreased enzymatic activity." evidence="2">
    <original>D</original>
    <variation>N</variation>
    <location>
        <position position="241"/>
    </location>
</feature>
<feature type="helix" evidence="12">
    <location>
        <begin position="40"/>
        <end position="50"/>
    </location>
</feature>
<feature type="turn" evidence="12">
    <location>
        <begin position="61"/>
        <end position="65"/>
    </location>
</feature>
<feature type="strand" evidence="12">
    <location>
        <begin position="68"/>
        <end position="70"/>
    </location>
</feature>
<feature type="strand" evidence="12">
    <location>
        <begin position="72"/>
        <end position="75"/>
    </location>
</feature>
<feature type="strand" evidence="12">
    <location>
        <begin position="87"/>
        <end position="89"/>
    </location>
</feature>
<feature type="strand" evidence="12">
    <location>
        <begin position="92"/>
        <end position="94"/>
    </location>
</feature>
<feature type="strand" evidence="12">
    <location>
        <begin position="96"/>
        <end position="99"/>
    </location>
</feature>
<feature type="strand" evidence="12">
    <location>
        <begin position="106"/>
        <end position="110"/>
    </location>
</feature>
<feature type="strand" evidence="12">
    <location>
        <begin position="122"/>
        <end position="125"/>
    </location>
</feature>
<feature type="strand" evidence="12">
    <location>
        <begin position="127"/>
        <end position="129"/>
    </location>
</feature>
<feature type="strand" evidence="12">
    <location>
        <begin position="137"/>
        <end position="147"/>
    </location>
</feature>
<feature type="strand" evidence="12">
    <location>
        <begin position="149"/>
        <end position="152"/>
    </location>
</feature>
<feature type="strand" evidence="12">
    <location>
        <begin position="154"/>
        <end position="170"/>
    </location>
</feature>
<feature type="strand" evidence="12">
    <location>
        <begin position="177"/>
        <end position="181"/>
    </location>
</feature>
<feature type="strand" evidence="12">
    <location>
        <begin position="187"/>
        <end position="191"/>
    </location>
</feature>
<feature type="strand" evidence="12">
    <location>
        <begin position="195"/>
        <end position="197"/>
    </location>
</feature>
<feature type="strand" evidence="12">
    <location>
        <begin position="203"/>
        <end position="209"/>
    </location>
</feature>
<feature type="strand" evidence="12">
    <location>
        <begin position="211"/>
        <end position="214"/>
    </location>
</feature>
<feature type="strand" evidence="12">
    <location>
        <begin position="219"/>
        <end position="222"/>
    </location>
</feature>
<feature type="strand" evidence="12">
    <location>
        <begin position="229"/>
        <end position="235"/>
    </location>
</feature>
<feature type="strand" evidence="12">
    <location>
        <begin position="237"/>
        <end position="239"/>
    </location>
</feature>
<feature type="strand" evidence="12">
    <location>
        <begin position="252"/>
        <end position="259"/>
    </location>
</feature>
<feature type="strand" evidence="12">
    <location>
        <begin position="261"/>
        <end position="267"/>
    </location>
</feature>
<feature type="strand" evidence="12">
    <location>
        <begin position="269"/>
        <end position="271"/>
    </location>
</feature>
<feature type="turn" evidence="12">
    <location>
        <begin position="276"/>
        <end position="278"/>
    </location>
</feature>
<feature type="strand" evidence="12">
    <location>
        <begin position="279"/>
        <end position="286"/>
    </location>
</feature>
<feature type="strand" evidence="12">
    <location>
        <begin position="292"/>
        <end position="298"/>
    </location>
</feature>
<feature type="strand" evidence="12">
    <location>
        <begin position="300"/>
        <end position="303"/>
    </location>
</feature>
<feature type="strand" evidence="12">
    <location>
        <begin position="308"/>
        <end position="310"/>
    </location>
</feature>
<feature type="strand" evidence="12">
    <location>
        <begin position="312"/>
        <end position="319"/>
    </location>
</feature>
<feature type="strand" evidence="12">
    <location>
        <begin position="321"/>
        <end position="323"/>
    </location>
</feature>
<feature type="strand" evidence="12">
    <location>
        <begin position="342"/>
        <end position="344"/>
    </location>
</feature>
<feature type="strand" evidence="12">
    <location>
        <begin position="348"/>
        <end position="350"/>
    </location>
</feature>
<feature type="strand" evidence="12">
    <location>
        <begin position="356"/>
        <end position="358"/>
    </location>
</feature>
<feature type="helix" evidence="12">
    <location>
        <begin position="370"/>
        <end position="372"/>
    </location>
</feature>
<feature type="strand" evidence="12">
    <location>
        <begin position="381"/>
        <end position="383"/>
    </location>
</feature>
<feature type="strand" evidence="12">
    <location>
        <begin position="390"/>
        <end position="395"/>
    </location>
</feature>
<feature type="strand" evidence="12">
    <location>
        <begin position="399"/>
        <end position="405"/>
    </location>
</feature>
<feature type="helix" evidence="12">
    <location>
        <begin position="408"/>
        <end position="410"/>
    </location>
</feature>
<feature type="strand" evidence="12">
    <location>
        <begin position="416"/>
        <end position="427"/>
    </location>
</feature>
<feature type="strand" evidence="12">
    <location>
        <begin position="431"/>
        <end position="436"/>
    </location>
</feature>
<feature type="strand" evidence="12">
    <location>
        <begin position="439"/>
        <end position="445"/>
    </location>
</feature>
<feature type="strand" evidence="12">
    <location>
        <begin position="452"/>
        <end position="458"/>
    </location>
</feature>
<feature type="turn" evidence="12">
    <location>
        <begin position="460"/>
        <end position="462"/>
    </location>
</feature>
<feature type="strand" evidence="12">
    <location>
        <begin position="465"/>
        <end position="471"/>
    </location>
</feature>
<feature type="strand" evidence="12">
    <location>
        <begin position="473"/>
        <end position="475"/>
    </location>
</feature>
<feature type="strand" evidence="12">
    <location>
        <begin position="477"/>
        <end position="495"/>
    </location>
</feature>
<feature type="strand" evidence="12">
    <location>
        <begin position="506"/>
        <end position="508"/>
    </location>
</feature>
<feature type="helix" evidence="12">
    <location>
        <begin position="514"/>
        <end position="517"/>
    </location>
</feature>
<feature type="strand" evidence="12">
    <location>
        <begin position="529"/>
        <end position="532"/>
    </location>
</feature>
<feature type="strand" evidence="12">
    <location>
        <begin position="537"/>
        <end position="545"/>
    </location>
</feature>
<feature type="strand" evidence="12">
    <location>
        <begin position="550"/>
        <end position="556"/>
    </location>
</feature>
<feature type="strand" evidence="12">
    <location>
        <begin position="558"/>
        <end position="560"/>
    </location>
</feature>
<feature type="strand" evidence="12">
    <location>
        <begin position="568"/>
        <end position="574"/>
    </location>
</feature>
<evidence type="ECO:0000269" key="1">
    <source>
    </source>
</evidence>
<evidence type="ECO:0000269" key="2">
    <source>
    </source>
</evidence>
<evidence type="ECO:0000269" key="3">
    <source>
    </source>
</evidence>
<evidence type="ECO:0000303" key="4">
    <source>
    </source>
</evidence>
<evidence type="ECO:0000303" key="5">
    <source>
    </source>
</evidence>
<evidence type="ECO:0000303" key="6">
    <source>
    </source>
</evidence>
<evidence type="ECO:0000305" key="7"/>
<evidence type="ECO:0000305" key="8">
    <source>
    </source>
</evidence>
<evidence type="ECO:0000305" key="9">
    <source>
    </source>
</evidence>
<evidence type="ECO:0000312" key="10">
    <source>
        <dbReference type="EMBL" id="ACY66700.1"/>
    </source>
</evidence>
<evidence type="ECO:0007744" key="11">
    <source>
        <dbReference type="PDB" id="6TKU"/>
    </source>
</evidence>
<evidence type="ECO:0007829" key="12">
    <source>
        <dbReference type="PDB" id="6TKU"/>
    </source>
</evidence>
<proteinExistence type="evidence at protein level"/>
<organism>
    <name type="scientific">Klebsiella phage KP32</name>
    <name type="common">Bacteriophage KP32</name>
    <dbReference type="NCBI Taxonomy" id="674082"/>
    <lineage>
        <taxon>Viruses</taxon>
        <taxon>Duplodnaviria</taxon>
        <taxon>Heunggongvirae</taxon>
        <taxon>Uroviricota</taxon>
        <taxon>Caudoviricetes</taxon>
        <taxon>Autographiviridae</taxon>
        <taxon>Studiervirinae</taxon>
        <taxon>Przondovirus</taxon>
        <taxon>Przondovirus KP32</taxon>
    </lineage>
</organism>
<dbReference type="EMBL" id="GQ413937">
    <property type="protein sequence ID" value="ACY66700.1"/>
    <property type="molecule type" value="Genomic_DNA"/>
</dbReference>
<dbReference type="RefSeq" id="YP_003347556.1">
    <property type="nucleotide sequence ID" value="NC_013647.1"/>
</dbReference>
<dbReference type="PDB" id="6TKU">
    <property type="method" value="X-ray"/>
    <property type="resolution" value="1.80 A"/>
    <property type="chains" value="A=1-576"/>
</dbReference>
<dbReference type="PDBsum" id="6TKU"/>
<dbReference type="SMR" id="D1L2X1"/>
<dbReference type="GeneID" id="8676102"/>
<dbReference type="KEGG" id="vg:8676102"/>
<dbReference type="OrthoDB" id="10542at10239"/>
<dbReference type="BRENDA" id="3.2.1.87">
    <property type="organism ID" value="16791"/>
</dbReference>
<dbReference type="Proteomes" id="UP000002632">
    <property type="component" value="Genome"/>
</dbReference>
<dbReference type="GO" id="GO:0098015">
    <property type="term" value="C:virus tail"/>
    <property type="evidence" value="ECO:0007669"/>
    <property type="project" value="UniProtKB-KW"/>
</dbReference>
<dbReference type="GO" id="GO:0098671">
    <property type="term" value="P:adhesion receptor-mediated virion attachment to host cell"/>
    <property type="evidence" value="ECO:0007669"/>
    <property type="project" value="UniProtKB-KW"/>
</dbReference>
<dbReference type="GO" id="GO:0098994">
    <property type="term" value="P:symbiont entry into host cell via disruption of host cell envelope"/>
    <property type="evidence" value="ECO:0007669"/>
    <property type="project" value="UniProtKB-KW"/>
</dbReference>
<dbReference type="GO" id="GO:0098996">
    <property type="term" value="P:symbiont entry into host cell via disruption of host cell glycocalyx"/>
    <property type="evidence" value="ECO:0000314"/>
    <property type="project" value="UniProtKB"/>
</dbReference>
<dbReference type="Gene3D" id="2.160.20.10">
    <property type="entry name" value="Single-stranded right-handed beta-helix, Pectin lyase-like"/>
    <property type="match status" value="1"/>
</dbReference>
<dbReference type="InterPro" id="IPR012334">
    <property type="entry name" value="Pectin_lyas_fold"/>
</dbReference>
<dbReference type="InterPro" id="IPR011050">
    <property type="entry name" value="Pectin_lyase_fold/virulence"/>
</dbReference>
<dbReference type="SUPFAM" id="SSF51126">
    <property type="entry name" value="Pectin lyase-like"/>
    <property type="match status" value="1"/>
</dbReference>
<protein>
    <recommendedName>
        <fullName evidence="7">Depolymerase 2, capsule K21-specific</fullName>
    </recommendedName>
    <alternativeName>
        <fullName evidence="6">Gene product 38</fullName>
        <shortName evidence="6">gp38</shortName>
    </alternativeName>
    <alternativeName>
        <fullName evidence="4">KP32gp38</fullName>
    </alternativeName>
    <alternativeName>
        <fullName evidence="7">Probable tail spike protein</fullName>
    </alternativeName>
</protein>
<comment type="function">
    <text evidence="1 2 3 8 9">Functions as a receptor binding protein (RBP) and probably mediates the attachment to the host capsular exopolysaccharides (Probable). Displays a depolymerase activity that specifically degrades the K21-type polysaccharides Klebsiella pneumoniae capsule, which allows the phage to reach the host cell membrane and bind the entry receptor (PubMed:30405575, PubMed:32386574, PubMed:33947754).</text>
</comment>
<comment type="subunit">
    <text evidence="1 2">Homotrimer (PubMed:30405575, PubMed:32386574). The 3 parallel chains are tightly packed together to form an elongated structure of approximately 7 x 12 nm (PubMed:32386574). Interacts (via N-terminus) with depolymerase 1 (via N-terminus); this interaction probably gives rise to a branched tailspike (PubMed:32386574).</text>
</comment>
<comment type="subcellular location">
    <subcellularLocation>
        <location evidence="7">Virion</location>
    </subcellularLocation>
    <text evidence="6 7">Tail appendage (Probable). Depolymerase 1 is connected to the phage tail via an N-terminal anchor domain, while depolymerase 2 is attached to depolymerase 1 (PubMed:33947754).</text>
</comment>
<comment type="domain">
    <text evidence="2 5">Consists in a catalytic region, a carbohydrate binding region and a lectin-like region (PubMed:32386574). The active site consists of catalytic dyads Asp-Glu located at the interface between 2 adjacent subunits (PubMed:32386574). The lectin-like region is probably involved in trimerization (PubMed:32386574).</text>
</comment>
<comment type="similarity">
    <text evidence="7">In the N-terminal section; belongs to the Przondovirus depolymerase 2 family.</text>
</comment>
<comment type="similarity">
    <text evidence="7">In the C-terminal section; belongs to the K21-specific depolymerase family.</text>
</comment>
<gene>
    <name evidence="10" type="primary">38</name>
</gene>
<keyword id="KW-0002">3D-structure</keyword>
<keyword id="KW-1238">Degradation of host capsule during virus entry</keyword>
<keyword id="KW-1235">Degradation of host cell envelope components during virus entry</keyword>
<keyword id="KW-0945">Host-virus interaction</keyword>
<keyword id="KW-1185">Reference proteome</keyword>
<keyword id="KW-1233">Viral attachment to host adhesion receptor</keyword>
<keyword id="KW-1161">Viral attachment to host cell</keyword>
<keyword id="KW-1227">Viral tail protein</keyword>
<keyword id="KW-0946">Virion</keyword>
<keyword id="KW-1160">Virus entry into host cell</keyword>
<organismHost>
    <name type="scientific">Klebsiella pneumoniae</name>
    <dbReference type="NCBI Taxonomy" id="573"/>
</organismHost>
<sequence length="576" mass="61687">MLDNFNQPKGSTIGVLKDGRTIQEAFDSLPRLESFSGSTATDKLRAAITLGVSEVAIGPVEGNGGRPYEFGDVVIPYPLRIVGCGSQGINVTKGTVLKRSAGASFMFHFTGEGQAQRPMGGGLFNINLNGDTATALGDIIKVTQWSYFKANNCAFQNMAGWGIRLKDVMESNISGNLFRRLGGPSGGGILFDDVRSAVTDNVNNLHIEDNTFALMSGPWIGSTANSNPDLIWIVRNKFEFDGTPAAPNTVDSYVLDFQQLSRAFIQDNGFTHFTTERNRYVGVLRVGATAVGTIKFEDNLLFACESAGLIAGGIVVSRGNVNNQGSATTAIKQFTNTSSKLCKLERVINVQSNGNVSVGQQILPDGYINMAELPGNTRLPSEYDADGETTSVLRVPANTQVRQWSVPKMYKDGLTVTKVTVRAKGAAAGAILSLQSGSTVLSTKSIDAGVWKNYVFYVKANQLQETLQLRNTGTADVLADGMVFGKVDYIDWDFAIAPGTLAAGAKYTTPNQSYLDVAGMRVQAVSIPMFDGPTTGLQVWVEATSANGSFVVVMKNDTGSELVTTVTRCRVRAFVS</sequence>
<reference key="1">
    <citation type="submission" date="2009-07" db="EMBL/GenBank/DDBJ databases">
        <title>Genomic sequence and analysis of Klebsiella sp. KP32 bacteriophage.</title>
        <authorList>
            <person name="Drulis-Kawa Z."/>
            <person name="Maciaszczyk-Dziubinska E."/>
            <person name="Bocer T."/>
        </authorList>
    </citation>
    <scope>NUCLEOTIDE SEQUENCE [LARGE SCALE GENOMIC DNA]</scope>
</reference>
<reference key="2">
    <citation type="journal article" date="2018" name="Front. Microbiol.">
        <title>Phage-Borne Depolymerases Decrease Klebsiella pneumoniae Resistance to Innate Defense Mechanisms.</title>
        <authorList>
            <person name="Majkowska-Skrobek G."/>
            <person name="Latka A."/>
            <person name="Berisio R."/>
            <person name="Squeglia F."/>
            <person name="Maciejewska B."/>
            <person name="Briers Y."/>
            <person name="Drulis-Kawa Z."/>
        </authorList>
    </citation>
    <scope>FUNCTION</scope>
    <scope>SUBUNIT</scope>
</reference>
<reference key="3">
    <citation type="journal article" date="2021" name="MBio">
        <title>Engineering the Modular Receptor-Binding Proteins of Klebsiella Phages Switches Their Capsule Serotype Specificity.</title>
        <authorList>
            <person name="Latka A."/>
            <person name="Lemire S."/>
            <person name="Grimon D."/>
            <person name="Dams D."/>
            <person name="Maciejewska B."/>
            <person name="Lu T."/>
            <person name="Drulis-Kawa Z."/>
            <person name="Briers Y."/>
        </authorList>
    </citation>
    <scope>FUNCTION</scope>
</reference>
<reference key="4">
    <citation type="journal article" date="2019" name="Front. Microbiol.">
        <title>Modeling the Architecture of Depolymerase-Containing Receptor Binding Proteins in Klebsiella Phages.</title>
        <authorList>
            <person name="Latka A."/>
            <person name="Leiman P.G."/>
            <person name="Drulis-Kawa Z."/>
            <person name="Briers Y."/>
        </authorList>
    </citation>
    <scope>REVIEW</scope>
</reference>
<reference evidence="11" key="5">
    <citation type="journal article" date="2020" name="Structure">
        <title>Structural and Functional Studies of a Klebsiella Phage Capsule Depolymerase Tailspike: Mechanistic Insights into Capsular Degradation.</title>
        <authorList>
            <person name="Squeglia F."/>
            <person name="Maciejewska B."/>
            <person name="Latka A."/>
            <person name="Ruggiero A."/>
            <person name="Briers Y."/>
            <person name="Drulis-Kawa Z."/>
            <person name="Berisio R."/>
        </authorList>
    </citation>
    <scope>X-RAY CRYSTALLOGRAPHY (1.80 ANGSTROMS)</scope>
    <scope>SUBUNIT</scope>
    <scope>FUNCTION</scope>
    <scope>MUTAGENESIS OF ASP-167; GLU-170; ASP-229; GLU-239 AND ASP-241</scope>
    <scope>DOMAIN</scope>
    <scope>INTERACTION WITH DEPOLYMERASE 1</scope>
    <scope>ACTIVE SITE</scope>
</reference>
<name>DPOL2_BPK32</name>
<accession>D1L2X1</accession>